<keyword id="KW-0963">Cytoplasm</keyword>
<keyword id="KW-0489">Methyltransferase</keyword>
<keyword id="KW-1185">Reference proteome</keyword>
<keyword id="KW-0698">rRNA processing</keyword>
<keyword id="KW-0949">S-adenosyl-L-methionine</keyword>
<keyword id="KW-0808">Transferase</keyword>
<dbReference type="EC" id="2.1.1.186" evidence="1"/>
<dbReference type="EMBL" id="CP000880">
    <property type="protein sequence ID" value="ABX24446.1"/>
    <property type="molecule type" value="Genomic_DNA"/>
</dbReference>
<dbReference type="SMR" id="A9MSA2"/>
<dbReference type="STRING" id="41514.SARI_04682"/>
<dbReference type="KEGG" id="ses:SARI_04682"/>
<dbReference type="HOGENOM" id="CLU_043780_0_0_6"/>
<dbReference type="Proteomes" id="UP000002084">
    <property type="component" value="Chromosome"/>
</dbReference>
<dbReference type="GO" id="GO:0005737">
    <property type="term" value="C:cytoplasm"/>
    <property type="evidence" value="ECO:0007669"/>
    <property type="project" value="UniProtKB-SubCell"/>
</dbReference>
<dbReference type="GO" id="GO:0008757">
    <property type="term" value="F:S-adenosylmethionine-dependent methyltransferase activity"/>
    <property type="evidence" value="ECO:0007669"/>
    <property type="project" value="UniProtKB-UniRule"/>
</dbReference>
<dbReference type="GO" id="GO:0032259">
    <property type="term" value="P:methylation"/>
    <property type="evidence" value="ECO:0007669"/>
    <property type="project" value="UniProtKB-KW"/>
</dbReference>
<dbReference type="GO" id="GO:0006364">
    <property type="term" value="P:rRNA processing"/>
    <property type="evidence" value="ECO:0007669"/>
    <property type="project" value="UniProtKB-UniRule"/>
</dbReference>
<dbReference type="FunFam" id="3.40.50.150:FF:000020">
    <property type="entry name" value="Ribosomal RNA large subunit methyltransferase M"/>
    <property type="match status" value="1"/>
</dbReference>
<dbReference type="Gene3D" id="3.30.2300.20">
    <property type="match status" value="1"/>
</dbReference>
<dbReference type="Gene3D" id="3.30.70.2810">
    <property type="match status" value="1"/>
</dbReference>
<dbReference type="Gene3D" id="3.40.50.150">
    <property type="entry name" value="Vaccinia Virus protein VP39"/>
    <property type="match status" value="1"/>
</dbReference>
<dbReference type="HAMAP" id="MF_01551">
    <property type="entry name" value="23SrRNA_methyltr_M"/>
    <property type="match status" value="1"/>
</dbReference>
<dbReference type="InterPro" id="IPR040739">
    <property type="entry name" value="RlmM_FDX"/>
</dbReference>
<dbReference type="InterPro" id="IPR048646">
    <property type="entry name" value="RlmM_THUMP-like"/>
</dbReference>
<dbReference type="InterPro" id="IPR002877">
    <property type="entry name" value="RNA_MeTrfase_FtsJ_dom"/>
</dbReference>
<dbReference type="InterPro" id="IPR011224">
    <property type="entry name" value="rRNA_MeTrfase_M"/>
</dbReference>
<dbReference type="InterPro" id="IPR029063">
    <property type="entry name" value="SAM-dependent_MTases_sf"/>
</dbReference>
<dbReference type="NCBIfam" id="NF008734">
    <property type="entry name" value="PRK11760.1"/>
    <property type="match status" value="1"/>
</dbReference>
<dbReference type="PANTHER" id="PTHR37524">
    <property type="entry name" value="RIBOSOMAL RNA LARGE SUBUNIT METHYLTRANSFERASE M"/>
    <property type="match status" value="1"/>
</dbReference>
<dbReference type="PANTHER" id="PTHR37524:SF2">
    <property type="entry name" value="RIBOSOMAL RNA METHYLTRANSFERASE FTSJ DOMAIN-CONTAINING PROTEIN"/>
    <property type="match status" value="1"/>
</dbReference>
<dbReference type="Pfam" id="PF01728">
    <property type="entry name" value="FtsJ"/>
    <property type="match status" value="1"/>
</dbReference>
<dbReference type="Pfam" id="PF18125">
    <property type="entry name" value="RlmM_FDX"/>
    <property type="match status" value="1"/>
</dbReference>
<dbReference type="Pfam" id="PF21239">
    <property type="entry name" value="RLMM_N"/>
    <property type="match status" value="1"/>
</dbReference>
<dbReference type="PIRSF" id="PIRSF028774">
    <property type="entry name" value="UCP028774"/>
    <property type="match status" value="1"/>
</dbReference>
<dbReference type="SUPFAM" id="SSF53335">
    <property type="entry name" value="S-adenosyl-L-methionine-dependent methyltransferases"/>
    <property type="match status" value="1"/>
</dbReference>
<feature type="chain" id="PRO_1000087737" description="Ribosomal RNA large subunit methyltransferase M">
    <location>
        <begin position="1"/>
        <end position="366"/>
    </location>
</feature>
<feature type="active site" description="Proton acceptor" evidence="1">
    <location>
        <position position="306"/>
    </location>
</feature>
<feature type="binding site" evidence="1">
    <location>
        <position position="188"/>
    </location>
    <ligand>
        <name>S-adenosyl-L-methionine</name>
        <dbReference type="ChEBI" id="CHEBI:59789"/>
    </ligand>
</feature>
<feature type="binding site" evidence="1">
    <location>
        <begin position="221"/>
        <end position="224"/>
    </location>
    <ligand>
        <name>S-adenosyl-L-methionine</name>
        <dbReference type="ChEBI" id="CHEBI:59789"/>
    </ligand>
</feature>
<feature type="binding site" evidence="1">
    <location>
        <position position="240"/>
    </location>
    <ligand>
        <name>S-adenosyl-L-methionine</name>
        <dbReference type="ChEBI" id="CHEBI:59789"/>
    </ligand>
</feature>
<feature type="binding site" evidence="1">
    <location>
        <position position="260"/>
    </location>
    <ligand>
        <name>S-adenosyl-L-methionine</name>
        <dbReference type="ChEBI" id="CHEBI:59789"/>
    </ligand>
</feature>
<feature type="binding site" evidence="1">
    <location>
        <position position="277"/>
    </location>
    <ligand>
        <name>S-adenosyl-L-methionine</name>
        <dbReference type="ChEBI" id="CHEBI:59789"/>
    </ligand>
</feature>
<proteinExistence type="inferred from homology"/>
<sequence length="366" mass="42062">MNKVVLLCRPGFEKECAAEITDKAGKRELFGFARVKENTGYVIYECYQPEDGEKLISELPFSSLIFARQWFVVGELLQHLPPEDRITPIVGMLQGVVEKGGELRVEVADTNESKELMKFCRKFTVPLRAALRDAGVLTHYETPKRPVVHVFFIAPGCCYTGYSLAHNHSPFYMGIPRLKFPSDAPSRSTLKLEEALHVFIPEDEWDERLANGMYAVDLGACPGGWTYQLVKRNMWVYSVDNGPMAQSLMDTGQVTWLREDGFRYRPNRNNISWMVCDMVEKPAKVTALMAQWLVNGWCRETIFNLKLPMKKRYEEVSHNLAYLQAQLDEHGVNAQIQARQLYHDREEVTVHVRRLWAAVGGRRDER</sequence>
<organism>
    <name type="scientific">Salmonella arizonae (strain ATCC BAA-731 / CDC346-86 / RSK2980)</name>
    <dbReference type="NCBI Taxonomy" id="41514"/>
    <lineage>
        <taxon>Bacteria</taxon>
        <taxon>Pseudomonadati</taxon>
        <taxon>Pseudomonadota</taxon>
        <taxon>Gammaproteobacteria</taxon>
        <taxon>Enterobacterales</taxon>
        <taxon>Enterobacteriaceae</taxon>
        <taxon>Salmonella</taxon>
    </lineage>
</organism>
<evidence type="ECO:0000255" key="1">
    <source>
        <dbReference type="HAMAP-Rule" id="MF_01551"/>
    </source>
</evidence>
<accession>A9MSA2</accession>
<name>RLMM_SALAR</name>
<reference key="1">
    <citation type="submission" date="2007-11" db="EMBL/GenBank/DDBJ databases">
        <authorList>
            <consortium name="The Salmonella enterica serovar Arizonae Genome Sequencing Project"/>
            <person name="McClelland M."/>
            <person name="Sanderson E.K."/>
            <person name="Porwollik S."/>
            <person name="Spieth J."/>
            <person name="Clifton W.S."/>
            <person name="Fulton R."/>
            <person name="Chunyan W."/>
            <person name="Wollam A."/>
            <person name="Shah N."/>
            <person name="Pepin K."/>
            <person name="Bhonagiri V."/>
            <person name="Nash W."/>
            <person name="Johnson M."/>
            <person name="Thiruvilangam P."/>
            <person name="Wilson R."/>
        </authorList>
    </citation>
    <scope>NUCLEOTIDE SEQUENCE [LARGE SCALE GENOMIC DNA]</scope>
    <source>
        <strain>ATCC BAA-731 / CDC346-86 / RSK2980</strain>
    </source>
</reference>
<comment type="function">
    <text evidence="1">Catalyzes the 2'-O-methylation at nucleotide C2498 in 23S rRNA.</text>
</comment>
<comment type="catalytic activity">
    <reaction evidence="1">
        <text>cytidine(2498) in 23S rRNA + S-adenosyl-L-methionine = 2'-O-methylcytidine(2498) in 23S rRNA + S-adenosyl-L-homocysteine + H(+)</text>
        <dbReference type="Rhea" id="RHEA:42788"/>
        <dbReference type="Rhea" id="RHEA-COMP:10244"/>
        <dbReference type="Rhea" id="RHEA-COMP:10245"/>
        <dbReference type="ChEBI" id="CHEBI:15378"/>
        <dbReference type="ChEBI" id="CHEBI:57856"/>
        <dbReference type="ChEBI" id="CHEBI:59789"/>
        <dbReference type="ChEBI" id="CHEBI:74495"/>
        <dbReference type="ChEBI" id="CHEBI:82748"/>
        <dbReference type="EC" id="2.1.1.186"/>
    </reaction>
</comment>
<comment type="subunit">
    <text evidence="1">Monomer.</text>
</comment>
<comment type="subcellular location">
    <subcellularLocation>
        <location evidence="1">Cytoplasm</location>
    </subcellularLocation>
</comment>
<comment type="similarity">
    <text evidence="1">Belongs to the class I-like SAM-binding methyltransferase superfamily. RNA methyltransferase RlmE family. RlmM subfamily.</text>
</comment>
<gene>
    <name evidence="1" type="primary">rlmM</name>
    <name type="ordered locus">SARI_04682</name>
</gene>
<protein>
    <recommendedName>
        <fullName evidence="1">Ribosomal RNA large subunit methyltransferase M</fullName>
        <ecNumber evidence="1">2.1.1.186</ecNumber>
    </recommendedName>
    <alternativeName>
        <fullName evidence="1">23S rRNA (cytidine2498-2'-O)-methyltransferase</fullName>
    </alternativeName>
    <alternativeName>
        <fullName evidence="1">23S rRNA 2'-O-ribose methyltransferase RlmM</fullName>
    </alternativeName>
</protein>